<accession>Q0S3Y4</accession>
<reference key="1">
    <citation type="journal article" date="2006" name="Proc. Natl. Acad. Sci. U.S.A.">
        <title>The complete genome of Rhodococcus sp. RHA1 provides insights into a catabolic powerhouse.</title>
        <authorList>
            <person name="McLeod M.P."/>
            <person name="Warren R.L."/>
            <person name="Hsiao W.W.L."/>
            <person name="Araki N."/>
            <person name="Myhre M."/>
            <person name="Fernandes C."/>
            <person name="Miyazawa D."/>
            <person name="Wong W."/>
            <person name="Lillquist A.L."/>
            <person name="Wang D."/>
            <person name="Dosanjh M."/>
            <person name="Hara H."/>
            <person name="Petrescu A."/>
            <person name="Morin R.D."/>
            <person name="Yang G."/>
            <person name="Stott J.M."/>
            <person name="Schein J.E."/>
            <person name="Shin H."/>
            <person name="Smailus D."/>
            <person name="Siddiqui A.S."/>
            <person name="Marra M.A."/>
            <person name="Jones S.J.M."/>
            <person name="Holt R."/>
            <person name="Brinkman F.S.L."/>
            <person name="Miyauchi K."/>
            <person name="Fukuda M."/>
            <person name="Davies J.E."/>
            <person name="Mohn W.W."/>
            <person name="Eltis L.D."/>
        </authorList>
    </citation>
    <scope>NUCLEOTIDE SEQUENCE [LARGE SCALE GENOMIC DNA]</scope>
    <source>
        <strain>RHA1</strain>
    </source>
</reference>
<keyword id="KW-0067">ATP-binding</keyword>
<keyword id="KW-0119">Carbohydrate metabolism</keyword>
<keyword id="KW-0320">Glycogen biosynthesis</keyword>
<keyword id="KW-0321">Glycogen metabolism</keyword>
<keyword id="KW-0547">Nucleotide-binding</keyword>
<keyword id="KW-0548">Nucleotidyltransferase</keyword>
<keyword id="KW-0808">Transferase</keyword>
<name>GLGC_RHOJR</name>
<proteinExistence type="inferred from homology"/>
<protein>
    <recommendedName>
        <fullName evidence="1">Glucose-1-phosphate adenylyltransferase</fullName>
        <ecNumber evidence="1">2.7.7.27</ecNumber>
    </recommendedName>
    <alternativeName>
        <fullName evidence="1">ADP-glucose pyrophosphorylase</fullName>
        <shortName evidence="1">ADPGlc PPase</shortName>
    </alternativeName>
    <alternativeName>
        <fullName evidence="1">ADP-glucose synthase</fullName>
    </alternativeName>
</protein>
<sequence>MRSQPHVLGIVLAGGEGKRLYPLTADRAKPAVPFGGAYRLIDFVLSNLVNAGYLRLCVLTQYKSHSLDRHISQTWRLSGFAGEYITPVPAQQRLGPRWYTGSADAILQSLNLVYDEDPEYIVVFGADHVYRMDPEQMVQHHIESGAGVTVAGIRVPRSEAFAFGCIDSDESGRIVQFLEKPAHPPGTPDDPNMTFASMGNYVFTTKVLVDAIRADSENSDSDHDMGGDIIPALVEAGEASVYDFKDNIVPGATDRDRGYWRDVGTLDAFYDAHMDLVSVHPIFNLYNRRWPIRGETENLAPAKFVQGGLAQESVVGAGCILSAATVRNSVLSSNVMVDSGATVEGSVLMPGVRIGKGAVVRRAILDKNVVVGDGEIIGVDLERDKQRFAVSNGGVVAIGKGVWI</sequence>
<gene>
    <name evidence="1" type="primary">glgC</name>
    <name type="ordered locus">RHA1_ro05975</name>
</gene>
<evidence type="ECO:0000255" key="1">
    <source>
        <dbReference type="HAMAP-Rule" id="MF_00624"/>
    </source>
</evidence>
<comment type="function">
    <text evidence="1">Involved in the biosynthesis of ADP-glucose, a building block required for the elongation reactions to produce glycogen. Catalyzes the reaction between ATP and alpha-D-glucose 1-phosphate (G1P) to produce pyrophosphate and ADP-Glc.</text>
</comment>
<comment type="catalytic activity">
    <reaction evidence="1">
        <text>alpha-D-glucose 1-phosphate + ATP + H(+) = ADP-alpha-D-glucose + diphosphate</text>
        <dbReference type="Rhea" id="RHEA:12120"/>
        <dbReference type="ChEBI" id="CHEBI:15378"/>
        <dbReference type="ChEBI" id="CHEBI:30616"/>
        <dbReference type="ChEBI" id="CHEBI:33019"/>
        <dbReference type="ChEBI" id="CHEBI:57498"/>
        <dbReference type="ChEBI" id="CHEBI:58601"/>
        <dbReference type="EC" id="2.7.7.27"/>
    </reaction>
</comment>
<comment type="pathway">
    <text evidence="1">Glycan biosynthesis; glycogen biosynthesis.</text>
</comment>
<comment type="subunit">
    <text evidence="1">Homotetramer.</text>
</comment>
<comment type="similarity">
    <text evidence="1">Belongs to the bacterial/plant glucose-1-phosphate adenylyltransferase family.</text>
</comment>
<organism>
    <name type="scientific">Rhodococcus jostii (strain RHA1)</name>
    <dbReference type="NCBI Taxonomy" id="101510"/>
    <lineage>
        <taxon>Bacteria</taxon>
        <taxon>Bacillati</taxon>
        <taxon>Actinomycetota</taxon>
        <taxon>Actinomycetes</taxon>
        <taxon>Mycobacteriales</taxon>
        <taxon>Nocardiaceae</taxon>
        <taxon>Rhodococcus</taxon>
    </lineage>
</organism>
<feature type="chain" id="PRO_0000261889" description="Glucose-1-phosphate adenylyltransferase">
    <location>
        <begin position="1"/>
        <end position="404"/>
    </location>
</feature>
<feature type="binding site" evidence="1">
    <location>
        <position position="99"/>
    </location>
    <ligand>
        <name>alpha-D-glucose 1-phosphate</name>
        <dbReference type="ChEBI" id="CHEBI:58601"/>
    </ligand>
</feature>
<feature type="binding site" evidence="1">
    <location>
        <position position="164"/>
    </location>
    <ligand>
        <name>alpha-D-glucose 1-phosphate</name>
        <dbReference type="ChEBI" id="CHEBI:58601"/>
    </ligand>
</feature>
<feature type="binding site" evidence="1">
    <location>
        <begin position="179"/>
        <end position="180"/>
    </location>
    <ligand>
        <name>alpha-D-glucose 1-phosphate</name>
        <dbReference type="ChEBI" id="CHEBI:58601"/>
    </ligand>
</feature>
<feature type="binding site" evidence="1">
    <location>
        <position position="197"/>
    </location>
    <ligand>
        <name>alpha-D-glucose 1-phosphate</name>
        <dbReference type="ChEBI" id="CHEBI:58601"/>
    </ligand>
</feature>
<dbReference type="EC" id="2.7.7.27" evidence="1"/>
<dbReference type="EMBL" id="CP000431">
    <property type="protein sequence ID" value="ABG97752.1"/>
    <property type="molecule type" value="Genomic_DNA"/>
</dbReference>
<dbReference type="SMR" id="Q0S3Y4"/>
<dbReference type="KEGG" id="rha:RHA1_ro05975"/>
<dbReference type="eggNOG" id="COG0448">
    <property type="taxonomic scope" value="Bacteria"/>
</dbReference>
<dbReference type="HOGENOM" id="CLU_029499_14_1_11"/>
<dbReference type="OrthoDB" id="9801810at2"/>
<dbReference type="BRENDA" id="2.7.7.27">
    <property type="organism ID" value="10764"/>
</dbReference>
<dbReference type="UniPathway" id="UPA00164"/>
<dbReference type="Proteomes" id="UP000008710">
    <property type="component" value="Chromosome"/>
</dbReference>
<dbReference type="GO" id="GO:0005524">
    <property type="term" value="F:ATP binding"/>
    <property type="evidence" value="ECO:0007669"/>
    <property type="project" value="UniProtKB-KW"/>
</dbReference>
<dbReference type="GO" id="GO:0008878">
    <property type="term" value="F:glucose-1-phosphate adenylyltransferase activity"/>
    <property type="evidence" value="ECO:0007669"/>
    <property type="project" value="UniProtKB-UniRule"/>
</dbReference>
<dbReference type="GO" id="GO:0005978">
    <property type="term" value="P:glycogen biosynthetic process"/>
    <property type="evidence" value="ECO:0007669"/>
    <property type="project" value="UniProtKB-UniRule"/>
</dbReference>
<dbReference type="CDD" id="cd02508">
    <property type="entry name" value="ADP_Glucose_PP"/>
    <property type="match status" value="1"/>
</dbReference>
<dbReference type="CDD" id="cd04651">
    <property type="entry name" value="LbH_G1P_AT_C"/>
    <property type="match status" value="1"/>
</dbReference>
<dbReference type="FunFam" id="3.90.550.10:FF:000014">
    <property type="entry name" value="Glucose-1-phosphate adenylyltransferase"/>
    <property type="match status" value="1"/>
</dbReference>
<dbReference type="Gene3D" id="2.160.10.10">
    <property type="entry name" value="Hexapeptide repeat proteins"/>
    <property type="match status" value="1"/>
</dbReference>
<dbReference type="Gene3D" id="3.90.550.10">
    <property type="entry name" value="Spore Coat Polysaccharide Biosynthesis Protein SpsA, Chain A"/>
    <property type="match status" value="1"/>
</dbReference>
<dbReference type="HAMAP" id="MF_00624">
    <property type="entry name" value="GlgC"/>
    <property type="match status" value="1"/>
</dbReference>
<dbReference type="InterPro" id="IPR011831">
    <property type="entry name" value="ADP-Glc_PPase"/>
</dbReference>
<dbReference type="InterPro" id="IPR005836">
    <property type="entry name" value="ADP_Glu_pyroP_CS"/>
</dbReference>
<dbReference type="InterPro" id="IPR023049">
    <property type="entry name" value="GlgC_bac"/>
</dbReference>
<dbReference type="InterPro" id="IPR056818">
    <property type="entry name" value="GlmU/GlgC-like_hexapep"/>
</dbReference>
<dbReference type="InterPro" id="IPR005835">
    <property type="entry name" value="NTP_transferase_dom"/>
</dbReference>
<dbReference type="InterPro" id="IPR029044">
    <property type="entry name" value="Nucleotide-diphossugar_trans"/>
</dbReference>
<dbReference type="InterPro" id="IPR011004">
    <property type="entry name" value="Trimer_LpxA-like_sf"/>
</dbReference>
<dbReference type="NCBIfam" id="TIGR02091">
    <property type="entry name" value="glgC"/>
    <property type="match status" value="1"/>
</dbReference>
<dbReference type="NCBIfam" id="NF001947">
    <property type="entry name" value="PRK00725.1"/>
    <property type="match status" value="1"/>
</dbReference>
<dbReference type="NCBIfam" id="NF002023">
    <property type="entry name" value="PRK00844.1"/>
    <property type="match status" value="1"/>
</dbReference>
<dbReference type="PANTHER" id="PTHR43523:SF2">
    <property type="entry name" value="GLUCOSE-1-PHOSPHATE ADENYLYLTRANSFERASE"/>
    <property type="match status" value="1"/>
</dbReference>
<dbReference type="PANTHER" id="PTHR43523">
    <property type="entry name" value="GLUCOSE-1-PHOSPHATE ADENYLYLTRANSFERASE-RELATED"/>
    <property type="match status" value="1"/>
</dbReference>
<dbReference type="Pfam" id="PF24894">
    <property type="entry name" value="Hexapep_GlmU"/>
    <property type="match status" value="1"/>
</dbReference>
<dbReference type="Pfam" id="PF00483">
    <property type="entry name" value="NTP_transferase"/>
    <property type="match status" value="1"/>
</dbReference>
<dbReference type="SUPFAM" id="SSF53448">
    <property type="entry name" value="Nucleotide-diphospho-sugar transferases"/>
    <property type="match status" value="1"/>
</dbReference>
<dbReference type="SUPFAM" id="SSF51161">
    <property type="entry name" value="Trimeric LpxA-like enzymes"/>
    <property type="match status" value="1"/>
</dbReference>
<dbReference type="PROSITE" id="PS00808">
    <property type="entry name" value="ADP_GLC_PYROPHOSPH_1"/>
    <property type="match status" value="1"/>
</dbReference>
<dbReference type="PROSITE" id="PS00809">
    <property type="entry name" value="ADP_GLC_PYROPHOSPH_2"/>
    <property type="match status" value="1"/>
</dbReference>
<dbReference type="PROSITE" id="PS00810">
    <property type="entry name" value="ADP_GLC_PYROPHOSPH_3"/>
    <property type="match status" value="1"/>
</dbReference>